<gene>
    <name type="primary">ZNF695</name>
</gene>
<proteinExistence type="evidence at protein level"/>
<accession>Q8IW36</accession>
<accession>Q5T0N9</accession>
<accession>Q5T0P1</accession>
<accession>Q5T0P3</accession>
<accession>Q7Z2W8</accession>
<accession>Q7Z648</accession>
<keyword id="KW-0025">Alternative splicing</keyword>
<keyword id="KW-0479">Metal-binding</keyword>
<keyword id="KW-0539">Nucleus</keyword>
<keyword id="KW-1267">Proteomics identification</keyword>
<keyword id="KW-1185">Reference proteome</keyword>
<keyword id="KW-0677">Repeat</keyword>
<keyword id="KW-0862">Zinc</keyword>
<keyword id="KW-0863">Zinc-finger</keyword>
<sequence>MGLLAFRDVALEFSPEEWECLDPAQRSLYRDVMLENYRNLISLGEDSFNMQFLFHSLAMSKPELIICLEARKEPWNVNTEKTARHSVLSSYLTEDILPEQGLQVSFQKVMLRRYERCCLEKLRLRNDWEIVGEWKGQKASYNGLDLCSATTHSKNFQCNKCVKGFSKFANLNKCKISHTGEKPFKCKECGNVSCMSLIMTQQQRIHIGENPYQCKKCGKAFNECSCFTDCKRIHVGEKHCKCEECNNIFKSCSSLAVVEKNHTEKKTYRCEECGKAFNLCSVLTKHKKIHTGEKPYKCEECGKSFKLFPYLTQHKRIHSREKPYKCEECGKVFKLLSYLTQHRRIHTGEKTFRCEECGKAFNQSSHLTEHRRIHTGEKPYKCEECGKAFTWFSYLIQHKRIHTGQKPYKCEECGKAFTWFSYLTQHKRIHTGEKPYKCDECGKAFNWFSYLTNHKRIHTGEKPYKCEECGKAFGQSSHLSKHKTIHTREKPYKCEECGKAFNHSAQLAVHEKTHT</sequence>
<comment type="function">
    <text>May be involved in transcriptional regulation.</text>
</comment>
<comment type="interaction">
    <interactant intactId="EBI-10261951">
        <id>Q8IW36</id>
    </interactant>
    <interactant intactId="EBI-748397">
        <id>P50222</id>
        <label>MEOX2</label>
    </interactant>
    <organismsDiffer>false</organismsDiffer>
    <experiments>3</experiments>
</comment>
<comment type="interaction">
    <interactant intactId="EBI-18985109">
        <id>Q8IW36-1</id>
    </interactant>
    <interactant intactId="EBI-9057264">
        <id>Q96JY6</id>
        <label>PDLIM2</label>
    </interactant>
    <organismsDiffer>false</organismsDiffer>
    <experiments>3</experiments>
</comment>
<comment type="subcellular location">
    <subcellularLocation>
        <location evidence="5">Nucleus</location>
    </subcellularLocation>
</comment>
<comment type="alternative products">
    <event type="alternative splicing"/>
    <isoform>
        <id>Q8IW36-4</id>
        <name>4</name>
        <sequence type="displayed"/>
    </isoform>
    <isoform>
        <id>Q8IW36-1</id>
        <name>1</name>
        <sequence type="described" ref="VSP_038548 VSP_038549"/>
    </isoform>
    <isoform>
        <id>Q8IW36-2</id>
        <name>2</name>
        <sequence type="described" ref="VSP_018108 VSP_018109"/>
    </isoform>
    <isoform>
        <id>Q8IW36-3</id>
        <name>3</name>
        <sequence type="described" ref="VSP_018106 VSP_018107"/>
    </isoform>
</comment>
<reference key="1">
    <citation type="journal article" date="2006" name="Nature">
        <title>The DNA sequence and biological annotation of human chromosome 1.</title>
        <authorList>
            <person name="Gregory S.G."/>
            <person name="Barlow K.F."/>
            <person name="McLay K.E."/>
            <person name="Kaul R."/>
            <person name="Swarbreck D."/>
            <person name="Dunham A."/>
            <person name="Scott C.E."/>
            <person name="Howe K.L."/>
            <person name="Woodfine K."/>
            <person name="Spencer C.C.A."/>
            <person name="Jones M.C."/>
            <person name="Gillson C."/>
            <person name="Searle S."/>
            <person name="Zhou Y."/>
            <person name="Kokocinski F."/>
            <person name="McDonald L."/>
            <person name="Evans R."/>
            <person name="Phillips K."/>
            <person name="Atkinson A."/>
            <person name="Cooper R."/>
            <person name="Jones C."/>
            <person name="Hall R.E."/>
            <person name="Andrews T.D."/>
            <person name="Lloyd C."/>
            <person name="Ainscough R."/>
            <person name="Almeida J.P."/>
            <person name="Ambrose K.D."/>
            <person name="Anderson F."/>
            <person name="Andrew R.W."/>
            <person name="Ashwell R.I.S."/>
            <person name="Aubin K."/>
            <person name="Babbage A.K."/>
            <person name="Bagguley C.L."/>
            <person name="Bailey J."/>
            <person name="Beasley H."/>
            <person name="Bethel G."/>
            <person name="Bird C.P."/>
            <person name="Bray-Allen S."/>
            <person name="Brown J.Y."/>
            <person name="Brown A.J."/>
            <person name="Buckley D."/>
            <person name="Burton J."/>
            <person name="Bye J."/>
            <person name="Carder C."/>
            <person name="Chapman J.C."/>
            <person name="Clark S.Y."/>
            <person name="Clarke G."/>
            <person name="Clee C."/>
            <person name="Cobley V."/>
            <person name="Collier R.E."/>
            <person name="Corby N."/>
            <person name="Coville G.J."/>
            <person name="Davies J."/>
            <person name="Deadman R."/>
            <person name="Dunn M."/>
            <person name="Earthrowl M."/>
            <person name="Ellington A.G."/>
            <person name="Errington H."/>
            <person name="Frankish A."/>
            <person name="Frankland J."/>
            <person name="French L."/>
            <person name="Garner P."/>
            <person name="Garnett J."/>
            <person name="Gay L."/>
            <person name="Ghori M.R.J."/>
            <person name="Gibson R."/>
            <person name="Gilby L.M."/>
            <person name="Gillett W."/>
            <person name="Glithero R.J."/>
            <person name="Grafham D.V."/>
            <person name="Griffiths C."/>
            <person name="Griffiths-Jones S."/>
            <person name="Grocock R."/>
            <person name="Hammond S."/>
            <person name="Harrison E.S.I."/>
            <person name="Hart E."/>
            <person name="Haugen E."/>
            <person name="Heath P.D."/>
            <person name="Holmes S."/>
            <person name="Holt K."/>
            <person name="Howden P.J."/>
            <person name="Hunt A.R."/>
            <person name="Hunt S.E."/>
            <person name="Hunter G."/>
            <person name="Isherwood J."/>
            <person name="James R."/>
            <person name="Johnson C."/>
            <person name="Johnson D."/>
            <person name="Joy A."/>
            <person name="Kay M."/>
            <person name="Kershaw J.K."/>
            <person name="Kibukawa M."/>
            <person name="Kimberley A.M."/>
            <person name="King A."/>
            <person name="Knights A.J."/>
            <person name="Lad H."/>
            <person name="Laird G."/>
            <person name="Lawlor S."/>
            <person name="Leongamornlert D.A."/>
            <person name="Lloyd D.M."/>
            <person name="Loveland J."/>
            <person name="Lovell J."/>
            <person name="Lush M.J."/>
            <person name="Lyne R."/>
            <person name="Martin S."/>
            <person name="Mashreghi-Mohammadi M."/>
            <person name="Matthews L."/>
            <person name="Matthews N.S.W."/>
            <person name="McLaren S."/>
            <person name="Milne S."/>
            <person name="Mistry S."/>
            <person name="Moore M.J.F."/>
            <person name="Nickerson T."/>
            <person name="O'Dell C.N."/>
            <person name="Oliver K."/>
            <person name="Palmeiri A."/>
            <person name="Palmer S.A."/>
            <person name="Parker A."/>
            <person name="Patel D."/>
            <person name="Pearce A.V."/>
            <person name="Peck A.I."/>
            <person name="Pelan S."/>
            <person name="Phelps K."/>
            <person name="Phillimore B.J."/>
            <person name="Plumb R."/>
            <person name="Rajan J."/>
            <person name="Raymond C."/>
            <person name="Rouse G."/>
            <person name="Saenphimmachak C."/>
            <person name="Sehra H.K."/>
            <person name="Sheridan E."/>
            <person name="Shownkeen R."/>
            <person name="Sims S."/>
            <person name="Skuce C.D."/>
            <person name="Smith M."/>
            <person name="Steward C."/>
            <person name="Subramanian S."/>
            <person name="Sycamore N."/>
            <person name="Tracey A."/>
            <person name="Tromans A."/>
            <person name="Van Helmond Z."/>
            <person name="Wall M."/>
            <person name="Wallis J.M."/>
            <person name="White S."/>
            <person name="Whitehead S.L."/>
            <person name="Wilkinson J.E."/>
            <person name="Willey D.L."/>
            <person name="Williams H."/>
            <person name="Wilming L."/>
            <person name="Wray P.W."/>
            <person name="Wu Z."/>
            <person name="Coulson A."/>
            <person name="Vaudin M."/>
            <person name="Sulston J.E."/>
            <person name="Durbin R.M."/>
            <person name="Hubbard T."/>
            <person name="Wooster R."/>
            <person name="Dunham I."/>
            <person name="Carter N.P."/>
            <person name="McVean G."/>
            <person name="Ross M.T."/>
            <person name="Harrow J."/>
            <person name="Olson M.V."/>
            <person name="Beck S."/>
            <person name="Rogers J."/>
            <person name="Bentley D.R."/>
        </authorList>
    </citation>
    <scope>NUCLEOTIDE SEQUENCE [LARGE SCALE GENOMIC DNA]</scope>
</reference>
<reference key="2">
    <citation type="journal article" date="2004" name="Genome Res.">
        <title>The status, quality, and expansion of the NIH full-length cDNA project: the Mammalian Gene Collection (MGC).</title>
        <authorList>
            <consortium name="The MGC Project Team"/>
        </authorList>
    </citation>
    <scope>NUCLEOTIDE SEQUENCE [LARGE SCALE MRNA] (ISOFORMS 1; 2 AND 3)</scope>
    <scope>VARIANTS LYS-84 AND ALA-87</scope>
    <source>
        <tissue>Leiomyosarcoma</tissue>
        <tissue>Lung carcinoma</tissue>
    </source>
</reference>
<evidence type="ECO:0000255" key="1">
    <source>
        <dbReference type="PROSITE-ProRule" id="PRU00042"/>
    </source>
</evidence>
<evidence type="ECO:0000255" key="2">
    <source>
        <dbReference type="PROSITE-ProRule" id="PRU00119"/>
    </source>
</evidence>
<evidence type="ECO:0000269" key="3">
    <source>
    </source>
</evidence>
<evidence type="ECO:0000303" key="4">
    <source>
    </source>
</evidence>
<evidence type="ECO:0000305" key="5"/>
<name>ZN695_HUMAN</name>
<dbReference type="EMBL" id="AC113174">
    <property type="status" value="NOT_ANNOTATED_CDS"/>
    <property type="molecule type" value="Genomic_DNA"/>
</dbReference>
<dbReference type="EMBL" id="AL512637">
    <property type="status" value="NOT_ANNOTATED_CDS"/>
    <property type="molecule type" value="Genomic_DNA"/>
</dbReference>
<dbReference type="EMBL" id="BC023527">
    <property type="status" value="NOT_ANNOTATED_CDS"/>
    <property type="molecule type" value="mRNA"/>
</dbReference>
<dbReference type="EMBL" id="BC041082">
    <property type="protein sequence ID" value="AAH41082.2"/>
    <property type="molecule type" value="mRNA"/>
</dbReference>
<dbReference type="EMBL" id="BC055096">
    <property type="status" value="NOT_ANNOTATED_CDS"/>
    <property type="molecule type" value="mRNA"/>
</dbReference>
<dbReference type="CCDS" id="CCDS44344.1">
    <molecule id="Q8IW36-4"/>
</dbReference>
<dbReference type="CCDS" id="CCDS55694.1">
    <molecule id="Q8IW36-1"/>
</dbReference>
<dbReference type="RefSeq" id="NP_001191150.2">
    <molecule id="Q8IW36-1"/>
    <property type="nucleotide sequence ID" value="NM_001204221.2"/>
</dbReference>
<dbReference type="SMR" id="Q8IW36"/>
<dbReference type="BioGRID" id="121380">
    <property type="interactions" value="24"/>
</dbReference>
<dbReference type="FunCoup" id="Q8IW36">
    <property type="interactions" value="21"/>
</dbReference>
<dbReference type="IntAct" id="Q8IW36">
    <property type="interactions" value="31"/>
</dbReference>
<dbReference type="STRING" id="9606.ENSP00000341236"/>
<dbReference type="iPTMnet" id="Q8IW36"/>
<dbReference type="PhosphoSitePlus" id="Q8IW36"/>
<dbReference type="BioMuta" id="ZNF695"/>
<dbReference type="DMDM" id="284018174"/>
<dbReference type="jPOST" id="Q8IW36"/>
<dbReference type="MassIVE" id="Q8IW36"/>
<dbReference type="PaxDb" id="9606-ENSP00000341236"/>
<dbReference type="PeptideAtlas" id="Q8IW36"/>
<dbReference type="ProteomicsDB" id="70800">
    <molecule id="Q8IW36-4"/>
</dbReference>
<dbReference type="ProteomicsDB" id="70801">
    <molecule id="Q8IW36-1"/>
</dbReference>
<dbReference type="ProteomicsDB" id="70802">
    <molecule id="Q8IW36-2"/>
</dbReference>
<dbReference type="ProteomicsDB" id="70803">
    <molecule id="Q8IW36-3"/>
</dbReference>
<dbReference type="Antibodypedia" id="11896">
    <property type="antibodies" value="143 antibodies from 26 providers"/>
</dbReference>
<dbReference type="DNASU" id="57116"/>
<dbReference type="Ensembl" id="ENST00000339986.8">
    <molecule id="Q8IW36-4"/>
    <property type="protein sequence ID" value="ENSP00000341236.7"/>
    <property type="gene ID" value="ENSG00000197472.15"/>
</dbReference>
<dbReference type="Ensembl" id="ENST00000366504.6">
    <molecule id="Q8IW36-2"/>
    <property type="protein sequence ID" value="ENSP00000355460.2"/>
    <property type="gene ID" value="ENSG00000197472.15"/>
</dbReference>
<dbReference type="Ensembl" id="ENST00000487338.6">
    <molecule id="Q8IW36-1"/>
    <property type="protein sequence ID" value="ENSP00000429736.1"/>
    <property type="gene ID" value="ENSG00000197472.15"/>
</dbReference>
<dbReference type="GeneID" id="57116"/>
<dbReference type="KEGG" id="hsa:57116"/>
<dbReference type="MANE-Select" id="ENST00000339986.8">
    <property type="protein sequence ID" value="ENSP00000341236.7"/>
    <property type="RefSeq nucleotide sequence ID" value="NM_020394.5"/>
    <property type="RefSeq protein sequence ID" value="NP_065127.5"/>
</dbReference>
<dbReference type="UCSC" id="uc001ibx.4">
    <molecule id="Q8IW36-4"/>
    <property type="organism name" value="human"/>
</dbReference>
<dbReference type="AGR" id="HGNC:30954"/>
<dbReference type="CTD" id="57116"/>
<dbReference type="DisGeNET" id="57116"/>
<dbReference type="GeneCards" id="ZNF695"/>
<dbReference type="HGNC" id="HGNC:30954">
    <property type="gene designation" value="ZNF695"/>
</dbReference>
<dbReference type="HPA" id="ENSG00000197472">
    <property type="expression patterns" value="Not detected"/>
</dbReference>
<dbReference type="MIM" id="616348">
    <property type="type" value="gene"/>
</dbReference>
<dbReference type="neXtProt" id="NX_Q8IW36"/>
<dbReference type="OpenTargets" id="ENSG00000197472"/>
<dbReference type="PharmGKB" id="PA142670493"/>
<dbReference type="VEuPathDB" id="HostDB:ENSG00000197472"/>
<dbReference type="eggNOG" id="KOG1721">
    <property type="taxonomic scope" value="Eukaryota"/>
</dbReference>
<dbReference type="GeneTree" id="ENSGT00940000154251"/>
<dbReference type="HOGENOM" id="CLU_002678_69_5_1"/>
<dbReference type="InParanoid" id="Q8IW36"/>
<dbReference type="OMA" id="TDYKRIR"/>
<dbReference type="OrthoDB" id="6105938at2759"/>
<dbReference type="PAN-GO" id="Q8IW36">
    <property type="GO annotations" value="3 GO annotations based on evolutionary models"/>
</dbReference>
<dbReference type="PhylomeDB" id="Q8IW36"/>
<dbReference type="TreeFam" id="TF342117"/>
<dbReference type="PathwayCommons" id="Q8IW36"/>
<dbReference type="SignaLink" id="Q8IW36"/>
<dbReference type="BioGRID-ORCS" id="57116">
    <property type="hits" value="9 hits in 1170 CRISPR screens"/>
</dbReference>
<dbReference type="GenomeRNAi" id="57116"/>
<dbReference type="Pharos" id="Q8IW36">
    <property type="development level" value="Tdark"/>
</dbReference>
<dbReference type="PRO" id="PR:Q8IW36"/>
<dbReference type="Proteomes" id="UP000005640">
    <property type="component" value="Chromosome 1"/>
</dbReference>
<dbReference type="RNAct" id="Q8IW36">
    <property type="molecule type" value="protein"/>
</dbReference>
<dbReference type="Bgee" id="ENSG00000197472">
    <property type="expression patterns" value="Expressed in primordial germ cell in gonad and 90 other cell types or tissues"/>
</dbReference>
<dbReference type="ExpressionAtlas" id="Q8IW36">
    <property type="expression patterns" value="baseline and differential"/>
</dbReference>
<dbReference type="GO" id="GO:0005634">
    <property type="term" value="C:nucleus"/>
    <property type="evidence" value="ECO:0007669"/>
    <property type="project" value="UniProtKB-SubCell"/>
</dbReference>
<dbReference type="GO" id="GO:0000981">
    <property type="term" value="F:DNA-binding transcription factor activity, RNA polymerase II-specific"/>
    <property type="evidence" value="ECO:0000318"/>
    <property type="project" value="GO_Central"/>
</dbReference>
<dbReference type="GO" id="GO:0000978">
    <property type="term" value="F:RNA polymerase II cis-regulatory region sequence-specific DNA binding"/>
    <property type="evidence" value="ECO:0000318"/>
    <property type="project" value="GO_Central"/>
</dbReference>
<dbReference type="GO" id="GO:0008270">
    <property type="term" value="F:zinc ion binding"/>
    <property type="evidence" value="ECO:0007669"/>
    <property type="project" value="UniProtKB-KW"/>
</dbReference>
<dbReference type="GO" id="GO:0006355">
    <property type="term" value="P:regulation of DNA-templated transcription"/>
    <property type="evidence" value="ECO:0000318"/>
    <property type="project" value="GO_Central"/>
</dbReference>
<dbReference type="CDD" id="cd07765">
    <property type="entry name" value="KRAB_A-box"/>
    <property type="match status" value="1"/>
</dbReference>
<dbReference type="FunFam" id="3.30.160.60:FF:005300">
    <property type="match status" value="1"/>
</dbReference>
<dbReference type="FunFam" id="3.30.160.60:FF:001737">
    <property type="entry name" value="Zinc finger protein 100"/>
    <property type="match status" value="2"/>
</dbReference>
<dbReference type="FunFam" id="3.30.160.60:FF:000524">
    <property type="entry name" value="Zinc finger protein 155"/>
    <property type="match status" value="2"/>
</dbReference>
<dbReference type="FunFam" id="3.30.160.60:FF:000133">
    <property type="entry name" value="Zinc finger protein 347"/>
    <property type="match status" value="1"/>
</dbReference>
<dbReference type="FunFam" id="3.30.160.60:FF:000016">
    <property type="entry name" value="zinc finger protein 37 homolog"/>
    <property type="match status" value="1"/>
</dbReference>
<dbReference type="FunFam" id="3.30.160.60:FF:000238">
    <property type="entry name" value="Zinc finger protein 485"/>
    <property type="match status" value="1"/>
</dbReference>
<dbReference type="FunFam" id="3.30.160.60:FF:000362">
    <property type="entry name" value="Zinc finger protein 606"/>
    <property type="match status" value="1"/>
</dbReference>
<dbReference type="FunFam" id="3.30.160.60:FF:001630">
    <property type="entry name" value="Zinc finger protein 888"/>
    <property type="match status" value="1"/>
</dbReference>
<dbReference type="FunFam" id="3.30.160.60:FF:000307">
    <property type="entry name" value="Zinc finger protein ZFP69 isoform 1"/>
    <property type="match status" value="1"/>
</dbReference>
<dbReference type="Gene3D" id="6.10.140.140">
    <property type="match status" value="1"/>
</dbReference>
<dbReference type="Gene3D" id="3.30.160.60">
    <property type="entry name" value="Classic Zinc Finger"/>
    <property type="match status" value="12"/>
</dbReference>
<dbReference type="InterPro" id="IPR001909">
    <property type="entry name" value="KRAB"/>
</dbReference>
<dbReference type="InterPro" id="IPR036051">
    <property type="entry name" value="KRAB_dom_sf"/>
</dbReference>
<dbReference type="InterPro" id="IPR050758">
    <property type="entry name" value="Znf_C2H2-type"/>
</dbReference>
<dbReference type="InterPro" id="IPR036236">
    <property type="entry name" value="Znf_C2H2_sf"/>
</dbReference>
<dbReference type="InterPro" id="IPR013087">
    <property type="entry name" value="Znf_C2H2_type"/>
</dbReference>
<dbReference type="PANTHER" id="PTHR23234:SF8">
    <property type="entry name" value="C2H2-TYPE DOMAIN-CONTAINING PROTEIN"/>
    <property type="match status" value="1"/>
</dbReference>
<dbReference type="PANTHER" id="PTHR23234">
    <property type="entry name" value="ZNF44 PROTEIN"/>
    <property type="match status" value="1"/>
</dbReference>
<dbReference type="Pfam" id="PF01352">
    <property type="entry name" value="KRAB"/>
    <property type="match status" value="1"/>
</dbReference>
<dbReference type="Pfam" id="PF00096">
    <property type="entry name" value="zf-C2H2"/>
    <property type="match status" value="9"/>
</dbReference>
<dbReference type="SMART" id="SM00349">
    <property type="entry name" value="KRAB"/>
    <property type="match status" value="1"/>
</dbReference>
<dbReference type="SMART" id="SM00355">
    <property type="entry name" value="ZnF_C2H2"/>
    <property type="match status" value="12"/>
</dbReference>
<dbReference type="SUPFAM" id="SSF57667">
    <property type="entry name" value="beta-beta-alpha zinc fingers"/>
    <property type="match status" value="7"/>
</dbReference>
<dbReference type="SUPFAM" id="SSF109640">
    <property type="entry name" value="KRAB domain (Kruppel-associated box)"/>
    <property type="match status" value="1"/>
</dbReference>
<dbReference type="PROSITE" id="PS50805">
    <property type="entry name" value="KRAB"/>
    <property type="match status" value="1"/>
</dbReference>
<dbReference type="PROSITE" id="PS00028">
    <property type="entry name" value="ZINC_FINGER_C2H2_1"/>
    <property type="match status" value="9"/>
</dbReference>
<dbReference type="PROSITE" id="PS50157">
    <property type="entry name" value="ZINC_FINGER_C2H2_2"/>
    <property type="match status" value="13"/>
</dbReference>
<organism>
    <name type="scientific">Homo sapiens</name>
    <name type="common">Human</name>
    <dbReference type="NCBI Taxonomy" id="9606"/>
    <lineage>
        <taxon>Eukaryota</taxon>
        <taxon>Metazoa</taxon>
        <taxon>Chordata</taxon>
        <taxon>Craniata</taxon>
        <taxon>Vertebrata</taxon>
        <taxon>Euteleostomi</taxon>
        <taxon>Mammalia</taxon>
        <taxon>Eutheria</taxon>
        <taxon>Euarchontoglires</taxon>
        <taxon>Primates</taxon>
        <taxon>Haplorrhini</taxon>
        <taxon>Catarrhini</taxon>
        <taxon>Hominidae</taxon>
        <taxon>Homo</taxon>
    </lineage>
</organism>
<protein>
    <recommendedName>
        <fullName>Zinc finger protein 695</fullName>
    </recommendedName>
    <alternativeName>
        <fullName>Zinc finger protein SBZF3</fullName>
    </alternativeName>
</protein>
<feature type="chain" id="PRO_0000233282" description="Zinc finger protein 695">
    <location>
        <begin position="1"/>
        <end position="515"/>
    </location>
</feature>
<feature type="domain" description="KRAB" evidence="2">
    <location>
        <begin position="4"/>
        <end position="87"/>
    </location>
</feature>
<feature type="zinc finger region" description="C2H2-type 1; atypical" evidence="1">
    <location>
        <begin position="156"/>
        <end position="178"/>
    </location>
</feature>
<feature type="zinc finger region" description="C2H2-type 2; degenerate" evidence="1">
    <location>
        <begin position="184"/>
        <end position="206"/>
    </location>
</feature>
<feature type="zinc finger region" description="C2H2-type 3; atypical" evidence="1">
    <location>
        <begin position="212"/>
        <end position="234"/>
    </location>
</feature>
<feature type="zinc finger region" description="C2H2-type 4; degenerate" evidence="1">
    <location>
        <begin position="240"/>
        <end position="262"/>
    </location>
</feature>
<feature type="zinc finger region" description="C2H2-type 5" evidence="1">
    <location>
        <begin position="268"/>
        <end position="290"/>
    </location>
</feature>
<feature type="zinc finger region" description="C2H2-type 6" evidence="1">
    <location>
        <begin position="296"/>
        <end position="318"/>
    </location>
</feature>
<feature type="zinc finger region" description="C2H2-type 7" evidence="1">
    <location>
        <begin position="324"/>
        <end position="346"/>
    </location>
</feature>
<feature type="zinc finger region" description="C2H2-type 8" evidence="1">
    <location>
        <begin position="352"/>
        <end position="374"/>
    </location>
</feature>
<feature type="zinc finger region" description="C2H2-type 9" evidence="1">
    <location>
        <begin position="380"/>
        <end position="402"/>
    </location>
</feature>
<feature type="zinc finger region" description="C2H2-type 10" evidence="1">
    <location>
        <begin position="408"/>
        <end position="430"/>
    </location>
</feature>
<feature type="zinc finger region" description="C2H2-type 11" evidence="1">
    <location>
        <begin position="436"/>
        <end position="458"/>
    </location>
</feature>
<feature type="zinc finger region" description="C2H2-type 12" evidence="1">
    <location>
        <begin position="464"/>
        <end position="486"/>
    </location>
</feature>
<feature type="zinc finger region" description="C2H2-type 13" evidence="1">
    <location>
        <begin position="492"/>
        <end position="514"/>
    </location>
</feature>
<feature type="splice variant" id="VSP_018106" description="In isoform 3." evidence="4">
    <original>L</original>
    <variation>M</variation>
    <location>
        <position position="88"/>
    </location>
</feature>
<feature type="splice variant" id="VSP_018107" description="In isoform 3." evidence="4">
    <location>
        <begin position="89"/>
        <end position="515"/>
    </location>
</feature>
<feature type="splice variant" id="VSP_038548" description="In isoform 1." evidence="4">
    <original>VGEWKGQKASYNGLDLCSATTHSKNFQCNKCVKGFSKFANLN</original>
    <variation>PCEDVLASPLPSAMILSFLRPPQKQKHVKPTEPVQSSTIELL</variation>
    <location>
        <begin position="131"/>
        <end position="172"/>
    </location>
</feature>
<feature type="splice variant" id="VSP_018108" description="In isoform 2." evidence="4">
    <original>GE</original>
    <variation>AM</variation>
    <location>
        <begin position="132"/>
        <end position="133"/>
    </location>
</feature>
<feature type="splice variant" id="VSP_018109" description="In isoform 2." evidence="4">
    <location>
        <begin position="134"/>
        <end position="515"/>
    </location>
</feature>
<feature type="splice variant" id="VSP_038549" description="In isoform 1." evidence="4">
    <location>
        <begin position="173"/>
        <end position="515"/>
    </location>
</feature>
<feature type="sequence variant" id="VAR_057446" description="In dbSNP:rs2642973." evidence="3">
    <original>R</original>
    <variation>K</variation>
    <location>
        <position position="84"/>
    </location>
</feature>
<feature type="sequence variant" id="VAR_057447" description="In dbSNP:rs2642992." evidence="3">
    <original>V</original>
    <variation>A</variation>
    <location>
        <position position="87"/>
    </location>
</feature>
<feature type="sequence variant" id="VAR_061963" description="In dbSNP:rs55762230.">
    <original>M</original>
    <variation>I</variation>
    <location>
        <position position="110"/>
    </location>
</feature>